<proteinExistence type="evidence at protein level"/>
<comment type="function">
    <text evidence="1">Histone H1 protein binds to linker DNA between nucleosomes forming the macromolecular structure known as the chromatin fiber. Histones H1 are necessary for the condensation of nucleosome chains into higher-order structured fibers. Also acts as a regulator of individual gene transcription through chromatin remodeling, nucleosome spacing and DNA methylation (By similarity).</text>
</comment>
<comment type="subunit">
    <text evidence="6">Interacts with MSX1.</text>
</comment>
<comment type="interaction">
    <interactant intactId="EBI-903960">
        <id>P43276</id>
    </interactant>
    <interactant intactId="EBI-903969">
        <id>P13297</id>
        <label>Msx1</label>
    </interactant>
    <organismsDiffer>false</organismsDiffer>
    <experiments>3</experiments>
</comment>
<comment type="subcellular location">
    <subcellularLocation>
        <location evidence="2">Nucleus</location>
    </subcellularLocation>
    <subcellularLocation>
        <location evidence="2">Chromosome</location>
    </subcellularLocation>
    <text evidence="2">Mainly localizes with heterochromatin (By similarity). Associates with actively transcribed chromatin and not heterochromatin (By similarity).</text>
</comment>
<comment type="domain">
    <text evidence="1">The C-terminal domain is required for high-affinity binding to chromatin.</text>
</comment>
<comment type="PTM">
    <text evidence="2">H1 histones are progressively phosphorylated during the cell cycle, becoming maximally phosphorylated during late G2 phase and M phase, and being dephosphorylated sharply thereafter.</text>
</comment>
<comment type="PTM">
    <text evidence="7">Citrullination at Arg-54 (H1R54ci) by PADI4 takes place within the DNA-binding site of H1 and results in its displacement from chromatin and global chromatin decondensation, thereby promoting pluripotency and stem cell maintenance.</text>
</comment>
<comment type="PTM">
    <text evidence="3">Hydroxybutyrylation of histones is induced by starvation.</text>
</comment>
<comment type="similarity">
    <text evidence="4">Belongs to the histone H1/H5 family.</text>
</comment>
<reference key="1">
    <citation type="journal article" date="1995" name="Mamm. Genome">
        <title>Isolation of two murine H1 histone genes and chromosomal mapping of the H1 gene complement.</title>
        <authorList>
            <person name="Drabent B."/>
            <person name="Franke K."/>
            <person name="Bode C."/>
            <person name="Kosciessa U."/>
            <person name="Bouterfa H."/>
            <person name="Hameister H."/>
            <person name="Doenecke D."/>
        </authorList>
    </citation>
    <scope>NUCLEOTIDE SEQUENCE [GENOMIC DNA]</scope>
    <source>
        <strain>BALB/cJ</strain>
        <tissue>Blood</tissue>
    </source>
</reference>
<reference key="2">
    <citation type="journal article" date="1996" name="Genome Res.">
        <title>Characterization of the mouse histone gene cluster on chromosome 13: 45 histone genes in three patches spread over 1Mb.</title>
        <authorList>
            <person name="Wang Z.-F."/>
            <person name="Krasikov T."/>
            <person name="Frey M.R."/>
            <person name="Wang J."/>
            <person name="Matera A.G."/>
            <person name="Marzluff W.F."/>
        </authorList>
    </citation>
    <scope>NUCLEOTIDE SEQUENCE [GENOMIC DNA]</scope>
    <source>
        <strain>C57BL/6J</strain>
    </source>
</reference>
<reference key="3">
    <citation type="journal article" date="2002" name="Genomics">
        <title>The human and mouse replication-dependent histone genes.</title>
        <authorList>
            <person name="Marzluff W.F."/>
            <person name="Gongidi P."/>
            <person name="Woods K.R."/>
            <person name="Jin J."/>
            <person name="Maltais L.J."/>
        </authorList>
    </citation>
    <scope>NUCLEOTIDE SEQUENCE [GENOMIC DNA]</scope>
</reference>
<reference key="4">
    <citation type="journal article" date="2005" name="Science">
        <title>The transcriptional landscape of the mammalian genome.</title>
        <authorList>
            <person name="Carninci P."/>
            <person name="Kasukawa T."/>
            <person name="Katayama S."/>
            <person name="Gough J."/>
            <person name="Frith M.C."/>
            <person name="Maeda N."/>
            <person name="Oyama R."/>
            <person name="Ravasi T."/>
            <person name="Lenhard B."/>
            <person name="Wells C."/>
            <person name="Kodzius R."/>
            <person name="Shimokawa K."/>
            <person name="Bajic V.B."/>
            <person name="Brenner S.E."/>
            <person name="Batalov S."/>
            <person name="Forrest A.R."/>
            <person name="Zavolan M."/>
            <person name="Davis M.J."/>
            <person name="Wilming L.G."/>
            <person name="Aidinis V."/>
            <person name="Allen J.E."/>
            <person name="Ambesi-Impiombato A."/>
            <person name="Apweiler R."/>
            <person name="Aturaliya R.N."/>
            <person name="Bailey T.L."/>
            <person name="Bansal M."/>
            <person name="Baxter L."/>
            <person name="Beisel K.W."/>
            <person name="Bersano T."/>
            <person name="Bono H."/>
            <person name="Chalk A.M."/>
            <person name="Chiu K.P."/>
            <person name="Choudhary V."/>
            <person name="Christoffels A."/>
            <person name="Clutterbuck D.R."/>
            <person name="Crowe M.L."/>
            <person name="Dalla E."/>
            <person name="Dalrymple B.P."/>
            <person name="de Bono B."/>
            <person name="Della Gatta G."/>
            <person name="di Bernardo D."/>
            <person name="Down T."/>
            <person name="Engstrom P."/>
            <person name="Fagiolini M."/>
            <person name="Faulkner G."/>
            <person name="Fletcher C.F."/>
            <person name="Fukushima T."/>
            <person name="Furuno M."/>
            <person name="Futaki S."/>
            <person name="Gariboldi M."/>
            <person name="Georgii-Hemming P."/>
            <person name="Gingeras T.R."/>
            <person name="Gojobori T."/>
            <person name="Green R.E."/>
            <person name="Gustincich S."/>
            <person name="Harbers M."/>
            <person name="Hayashi Y."/>
            <person name="Hensch T.K."/>
            <person name="Hirokawa N."/>
            <person name="Hill D."/>
            <person name="Huminiecki L."/>
            <person name="Iacono M."/>
            <person name="Ikeo K."/>
            <person name="Iwama A."/>
            <person name="Ishikawa T."/>
            <person name="Jakt M."/>
            <person name="Kanapin A."/>
            <person name="Katoh M."/>
            <person name="Kawasawa Y."/>
            <person name="Kelso J."/>
            <person name="Kitamura H."/>
            <person name="Kitano H."/>
            <person name="Kollias G."/>
            <person name="Krishnan S.P."/>
            <person name="Kruger A."/>
            <person name="Kummerfeld S.K."/>
            <person name="Kurochkin I.V."/>
            <person name="Lareau L.F."/>
            <person name="Lazarevic D."/>
            <person name="Lipovich L."/>
            <person name="Liu J."/>
            <person name="Liuni S."/>
            <person name="McWilliam S."/>
            <person name="Madan Babu M."/>
            <person name="Madera M."/>
            <person name="Marchionni L."/>
            <person name="Matsuda H."/>
            <person name="Matsuzawa S."/>
            <person name="Miki H."/>
            <person name="Mignone F."/>
            <person name="Miyake S."/>
            <person name="Morris K."/>
            <person name="Mottagui-Tabar S."/>
            <person name="Mulder N."/>
            <person name="Nakano N."/>
            <person name="Nakauchi H."/>
            <person name="Ng P."/>
            <person name="Nilsson R."/>
            <person name="Nishiguchi S."/>
            <person name="Nishikawa S."/>
            <person name="Nori F."/>
            <person name="Ohara O."/>
            <person name="Okazaki Y."/>
            <person name="Orlando V."/>
            <person name="Pang K.C."/>
            <person name="Pavan W.J."/>
            <person name="Pavesi G."/>
            <person name="Pesole G."/>
            <person name="Petrovsky N."/>
            <person name="Piazza S."/>
            <person name="Reed J."/>
            <person name="Reid J.F."/>
            <person name="Ring B.Z."/>
            <person name="Ringwald M."/>
            <person name="Rost B."/>
            <person name="Ruan Y."/>
            <person name="Salzberg S.L."/>
            <person name="Sandelin A."/>
            <person name="Schneider C."/>
            <person name="Schoenbach C."/>
            <person name="Sekiguchi K."/>
            <person name="Semple C.A."/>
            <person name="Seno S."/>
            <person name="Sessa L."/>
            <person name="Sheng Y."/>
            <person name="Shibata Y."/>
            <person name="Shimada H."/>
            <person name="Shimada K."/>
            <person name="Silva D."/>
            <person name="Sinclair B."/>
            <person name="Sperling S."/>
            <person name="Stupka E."/>
            <person name="Sugiura K."/>
            <person name="Sultana R."/>
            <person name="Takenaka Y."/>
            <person name="Taki K."/>
            <person name="Tammoja K."/>
            <person name="Tan S.L."/>
            <person name="Tang S."/>
            <person name="Taylor M.S."/>
            <person name="Tegner J."/>
            <person name="Teichmann S.A."/>
            <person name="Ueda H.R."/>
            <person name="van Nimwegen E."/>
            <person name="Verardo R."/>
            <person name="Wei C.L."/>
            <person name="Yagi K."/>
            <person name="Yamanishi H."/>
            <person name="Zabarovsky E."/>
            <person name="Zhu S."/>
            <person name="Zimmer A."/>
            <person name="Hide W."/>
            <person name="Bult C."/>
            <person name="Grimmond S.M."/>
            <person name="Teasdale R.D."/>
            <person name="Liu E.T."/>
            <person name="Brusic V."/>
            <person name="Quackenbush J."/>
            <person name="Wahlestedt C."/>
            <person name="Mattick J.S."/>
            <person name="Hume D.A."/>
            <person name="Kai C."/>
            <person name="Sasaki D."/>
            <person name="Tomaru Y."/>
            <person name="Fukuda S."/>
            <person name="Kanamori-Katayama M."/>
            <person name="Suzuki M."/>
            <person name="Aoki J."/>
            <person name="Arakawa T."/>
            <person name="Iida J."/>
            <person name="Imamura K."/>
            <person name="Itoh M."/>
            <person name="Kato T."/>
            <person name="Kawaji H."/>
            <person name="Kawagashira N."/>
            <person name="Kawashima T."/>
            <person name="Kojima M."/>
            <person name="Kondo S."/>
            <person name="Konno H."/>
            <person name="Nakano K."/>
            <person name="Ninomiya N."/>
            <person name="Nishio T."/>
            <person name="Okada M."/>
            <person name="Plessy C."/>
            <person name="Shibata K."/>
            <person name="Shiraki T."/>
            <person name="Suzuki S."/>
            <person name="Tagami M."/>
            <person name="Waki K."/>
            <person name="Watahiki A."/>
            <person name="Okamura-Oho Y."/>
            <person name="Suzuki H."/>
            <person name="Kawai J."/>
            <person name="Hayashizaki Y."/>
        </authorList>
    </citation>
    <scope>NUCLEOTIDE SEQUENCE [LARGE SCALE MRNA] OF 1-220</scope>
    <source>
        <strain>C57BL/6J</strain>
        <tissue>Embryonic kidney</tissue>
    </source>
</reference>
<reference key="5">
    <citation type="journal article" date="2006" name="Genes Dev.">
        <title>PIAS1 confers DNA-binding specificity on the Msx1 homeoprotein.</title>
        <authorList>
            <person name="Lee H."/>
            <person name="Quinn J.C."/>
            <person name="Prasanth K.V."/>
            <person name="Swiss V.A."/>
            <person name="Economides K.D."/>
            <person name="Camacho M.M."/>
            <person name="Spector D.L."/>
            <person name="Abate-Shen C."/>
        </authorList>
    </citation>
    <scope>INTERACTION WITH MSX1</scope>
</reference>
<reference key="6">
    <citation type="journal article" date="2007" name="Proc. Natl. Acad. Sci. U.S.A.">
        <title>Large-scale phosphorylation analysis of mouse liver.</title>
        <authorList>
            <person name="Villen J."/>
            <person name="Beausoleil S.A."/>
            <person name="Gerber S.A."/>
            <person name="Gygi S.P."/>
        </authorList>
    </citation>
    <scope>ACETYLATION [LARGE SCALE ANALYSIS] AT SER-2</scope>
    <scope>PHOSPHORYLATION [LARGE SCALE ANALYSIS] AT SER-18</scope>
    <scope>CLEAVAGE OF INITIATOR METHIONINE [LARGE SCALE ANALYSIS]</scope>
    <scope>IDENTIFICATION BY MASS SPECTROMETRY [LARGE SCALE ANALYSIS]</scope>
    <source>
        <tissue>Liver</tissue>
    </source>
</reference>
<reference key="7">
    <citation type="journal article" date="2010" name="Cell">
        <title>A tissue-specific atlas of mouse protein phosphorylation and expression.</title>
        <authorList>
            <person name="Huttlin E.L."/>
            <person name="Jedrychowski M.P."/>
            <person name="Elias J.E."/>
            <person name="Goswami T."/>
            <person name="Rad R."/>
            <person name="Beausoleil S.A."/>
            <person name="Villen J."/>
            <person name="Haas W."/>
            <person name="Sowa M.E."/>
            <person name="Gygi S.P."/>
        </authorList>
    </citation>
    <scope>PHOSPHORYLATION [LARGE SCALE ANALYSIS] AT THR-36</scope>
    <scope>IDENTIFICATION BY MASS SPECTROMETRY [LARGE SCALE ANALYSIS]</scope>
    <source>
        <tissue>Spleen</tissue>
    </source>
</reference>
<reference key="8">
    <citation type="journal article" date="2013" name="Mol. Cell">
        <title>SIRT5-mediated lysine desuccinylation impacts diverse metabolic pathways.</title>
        <authorList>
            <person name="Park J."/>
            <person name="Chen Y."/>
            <person name="Tishkoff D.X."/>
            <person name="Peng C."/>
            <person name="Tan M."/>
            <person name="Dai L."/>
            <person name="Xie Z."/>
            <person name="Zhang Y."/>
            <person name="Zwaans B.M."/>
            <person name="Skinner M.E."/>
            <person name="Lombard D.B."/>
            <person name="Zhao Y."/>
        </authorList>
    </citation>
    <scope>ACETYLATION [LARGE SCALE ANALYSIS] AT SER-2; LYS-17; LYS-46 AND LYS-75</scope>
    <scope>SUCCINYLATION [LARGE SCALE ANALYSIS] AT LYS-34</scope>
    <scope>CLEAVAGE OF INITIATOR METHIONINE [LARGE SCALE ANALYSIS]</scope>
    <scope>IDENTIFICATION BY MASS SPECTROMETRY [LARGE SCALE ANALYSIS]</scope>
    <source>
        <tissue>Embryonic fibroblast</tissue>
    </source>
</reference>
<reference key="9">
    <citation type="journal article" date="2014" name="Nature">
        <title>Citrullination regulates pluripotency and histone H1 binding to chromatin.</title>
        <authorList>
            <person name="Christophorou M.A."/>
            <person name="Castelo-Branco G."/>
            <person name="Halley-Stott R.P."/>
            <person name="Oliveira C.S."/>
            <person name="Loos R."/>
            <person name="Radzisheuskaya A."/>
            <person name="Mowen K.A."/>
            <person name="Bertone P."/>
            <person name="Silva J.C."/>
            <person name="Zernicka-Goetz M."/>
            <person name="Nielsen M.L."/>
            <person name="Gurdon J.B."/>
            <person name="Kouzarides T."/>
        </authorList>
    </citation>
    <scope>CITRULLINATION AT ARG-54</scope>
</reference>
<keyword id="KW-0007">Acetylation</keyword>
<keyword id="KW-0158">Chromosome</keyword>
<keyword id="KW-0164">Citrullination</keyword>
<keyword id="KW-0238">DNA-binding</keyword>
<keyword id="KW-0379">Hydroxylation</keyword>
<keyword id="KW-0488">Methylation</keyword>
<keyword id="KW-0539">Nucleus</keyword>
<keyword id="KW-0597">Phosphoprotein</keyword>
<keyword id="KW-1185">Reference proteome</keyword>
<sequence>MSETAPAETAAPAPVEKSPAKKKTTKKAGAAKRKATGPPVSELITKAVSASKERGGVSLPALKKALAAGGYDVEKNNSRIKLGLKSLVSKGTLVQTKGTGASGSFKLNKKAASGEAKPKAKKTGAAKAKKPAGATPKKPKKTAGAKKTVKKTPKKAKKPAAAGVKKVAKSPKKAKAAAKPKKAAKSPAKPKAVKSKASKPKVTKPKTAKPKAAKAKKAVSKKK</sequence>
<name>H15_MOUSE</name>
<evidence type="ECO:0000250" key="1"/>
<evidence type="ECO:0000250" key="2">
    <source>
        <dbReference type="UniProtKB" id="P16401"/>
    </source>
</evidence>
<evidence type="ECO:0000250" key="3">
    <source>
        <dbReference type="UniProtKB" id="P43277"/>
    </source>
</evidence>
<evidence type="ECO:0000255" key="4">
    <source>
        <dbReference type="PROSITE-ProRule" id="PRU00837"/>
    </source>
</evidence>
<evidence type="ECO:0000256" key="5">
    <source>
        <dbReference type="SAM" id="MobiDB-lite"/>
    </source>
</evidence>
<evidence type="ECO:0000269" key="6">
    <source>
    </source>
</evidence>
<evidence type="ECO:0000269" key="7">
    <source>
    </source>
</evidence>
<evidence type="ECO:0000305" key="8"/>
<evidence type="ECO:0007744" key="9">
    <source>
    </source>
</evidence>
<evidence type="ECO:0007744" key="10">
    <source>
    </source>
</evidence>
<evidence type="ECO:0007744" key="11">
    <source>
    </source>
</evidence>
<accession>P43276</accession>
<accession>Q9CRM8</accession>
<gene>
    <name type="primary">H1-5</name>
    <name type="synonym">H1f5</name>
    <name type="synonym">Hist1h1b</name>
</gene>
<organism>
    <name type="scientific">Mus musculus</name>
    <name type="common">Mouse</name>
    <dbReference type="NCBI Taxonomy" id="10090"/>
    <lineage>
        <taxon>Eukaryota</taxon>
        <taxon>Metazoa</taxon>
        <taxon>Chordata</taxon>
        <taxon>Craniata</taxon>
        <taxon>Vertebrata</taxon>
        <taxon>Euteleostomi</taxon>
        <taxon>Mammalia</taxon>
        <taxon>Eutheria</taxon>
        <taxon>Euarchontoglires</taxon>
        <taxon>Glires</taxon>
        <taxon>Rodentia</taxon>
        <taxon>Myomorpha</taxon>
        <taxon>Muroidea</taxon>
        <taxon>Muridae</taxon>
        <taxon>Murinae</taxon>
        <taxon>Mus</taxon>
        <taxon>Mus</taxon>
    </lineage>
</organism>
<protein>
    <recommendedName>
        <fullName>Histone H1.5</fullName>
    </recommendedName>
    <alternativeName>
        <fullName>H1 VAR.5</fullName>
    </alternativeName>
    <alternativeName>
        <fullName>H1b</fullName>
    </alternativeName>
</protein>
<feature type="initiator methionine" description="Removed" evidence="9 11">
    <location>
        <position position="1"/>
    </location>
</feature>
<feature type="chain" id="PRO_0000195918" description="Histone H1.5">
    <location>
        <begin position="2"/>
        <end position="223"/>
    </location>
</feature>
<feature type="domain" description="H15" evidence="4">
    <location>
        <begin position="36"/>
        <end position="109"/>
    </location>
</feature>
<feature type="region of interest" description="Disordered" evidence="5">
    <location>
        <begin position="1"/>
        <end position="56"/>
    </location>
</feature>
<feature type="region of interest" description="Disordered" evidence="5">
    <location>
        <begin position="91"/>
        <end position="223"/>
    </location>
</feature>
<feature type="compositionally biased region" description="Low complexity" evidence="5">
    <location>
        <begin position="1"/>
        <end position="14"/>
    </location>
</feature>
<feature type="compositionally biased region" description="Basic residues" evidence="5">
    <location>
        <begin position="20"/>
        <end position="35"/>
    </location>
</feature>
<feature type="compositionally biased region" description="Basic residues" evidence="5">
    <location>
        <begin position="119"/>
        <end position="130"/>
    </location>
</feature>
<feature type="compositionally biased region" description="Basic residues" evidence="5">
    <location>
        <begin position="137"/>
        <end position="158"/>
    </location>
</feature>
<feature type="compositionally biased region" description="Basic residues" evidence="5">
    <location>
        <begin position="166"/>
        <end position="184"/>
    </location>
</feature>
<feature type="compositionally biased region" description="Basic residues" evidence="5">
    <location>
        <begin position="191"/>
        <end position="223"/>
    </location>
</feature>
<feature type="modified residue" description="N-acetylserine" evidence="9 11">
    <location>
        <position position="2"/>
    </location>
</feature>
<feature type="modified residue" description="Phosphoserine" evidence="2">
    <location>
        <position position="2"/>
    </location>
</feature>
<feature type="modified residue" description="N6-acetyllysine" evidence="11">
    <location>
        <position position="17"/>
    </location>
</feature>
<feature type="modified residue" description="Phosphoserine" evidence="9">
    <location>
        <position position="18"/>
    </location>
</feature>
<feature type="modified residue" description="N6-methyllysine" evidence="2">
    <location>
        <position position="27"/>
    </location>
</feature>
<feature type="modified residue" description="N6-(beta-hydroxybutyryl)lysine; alternate" evidence="3">
    <location>
        <position position="34"/>
    </location>
</feature>
<feature type="modified residue" description="N6-succinyllysine; alternate" evidence="11">
    <location>
        <position position="34"/>
    </location>
</feature>
<feature type="modified residue" description="Phosphothreonine" evidence="10">
    <location>
        <position position="36"/>
    </location>
</feature>
<feature type="modified residue" description="N6-acetyllysine" evidence="11">
    <location>
        <position position="46"/>
    </location>
</feature>
<feature type="modified residue" description="N6-(beta-hydroxybutyryl)lysine" evidence="3">
    <location>
        <position position="52"/>
    </location>
</feature>
<feature type="modified residue" description="Citrulline" evidence="7">
    <location>
        <position position="54"/>
    </location>
</feature>
<feature type="modified residue" description="N6-(beta-hydroxybutyryl)lysine" evidence="3">
    <location>
        <position position="64"/>
    </location>
</feature>
<feature type="modified residue" description="N6-acetyllysine" evidence="11">
    <location>
        <position position="75"/>
    </location>
</feature>
<feature type="modified residue" description="N6-(beta-hydroxybutyryl)lysine" evidence="3">
    <location>
        <position position="85"/>
    </location>
</feature>
<feature type="modified residue" description="N6-(beta-hydroxybutyryl)lysine" evidence="3">
    <location>
        <position position="90"/>
    </location>
</feature>
<feature type="modified residue" description="N6-(beta-hydroxybutyryl)lysine" evidence="3">
    <location>
        <position position="106"/>
    </location>
</feature>
<feature type="modified residue" description="Phosphothreonine" evidence="2">
    <location>
        <position position="135"/>
    </location>
</feature>
<feature type="modified residue" description="Phosphothreonine" evidence="2">
    <location>
        <position position="152"/>
    </location>
</feature>
<feature type="modified residue" description="N6-acetyllysine" evidence="2">
    <location>
        <position position="165"/>
    </location>
</feature>
<feature type="modified residue" description="Phosphoserine" evidence="2">
    <location>
        <position position="170"/>
    </location>
</feature>
<feature type="modified residue" description="Phosphoserine" evidence="2">
    <location>
        <position position="186"/>
    </location>
</feature>
<feature type="sequence conflict" description="In Ref. 3; BAB32001." evidence="8" ref="3">
    <original>A</original>
    <variation>T</variation>
    <location>
        <position position="61"/>
    </location>
</feature>
<feature type="sequence conflict" description="In Ref. 3; BAB32001." evidence="8" ref="3">
    <original>A</original>
    <variation>V</variation>
    <location>
        <position position="120"/>
    </location>
</feature>
<feature type="sequence conflict" description="In Ref. 3; BAB32001." evidence="8" ref="3">
    <original>K</original>
    <variation>N</variation>
    <location>
        <position position="137"/>
    </location>
</feature>
<feature type="sequence conflict" description="In Ref. 3; BAB32001." evidence="8" ref="3">
    <original>S</original>
    <variation>F</variation>
    <location>
        <position position="195"/>
    </location>
</feature>
<dbReference type="EMBL" id="Z46227">
    <property type="protein sequence ID" value="CAA86299.1"/>
    <property type="molecule type" value="Genomic_DNA"/>
</dbReference>
<dbReference type="EMBL" id="U62922">
    <property type="protein sequence ID" value="AAB05798.1"/>
    <property type="molecule type" value="Genomic_DNA"/>
</dbReference>
<dbReference type="EMBL" id="AY158904">
    <property type="protein sequence ID" value="AAO06215.1"/>
    <property type="molecule type" value="Genomic_DNA"/>
</dbReference>
<dbReference type="EMBL" id="AK020117">
    <property type="protein sequence ID" value="BAB32001.1"/>
    <property type="molecule type" value="mRNA"/>
</dbReference>
<dbReference type="CCDS" id="CCDS26295.1"/>
<dbReference type="PIR" id="A35245">
    <property type="entry name" value="A35245"/>
</dbReference>
<dbReference type="PIR" id="S49492">
    <property type="entry name" value="S49492"/>
</dbReference>
<dbReference type="RefSeq" id="NP_064418.1">
    <property type="nucleotide sequence ID" value="NM_020034.2"/>
</dbReference>
<dbReference type="SMR" id="P43276"/>
<dbReference type="BioGRID" id="208131">
    <property type="interactions" value="19"/>
</dbReference>
<dbReference type="FunCoup" id="P43276">
    <property type="interactions" value="497"/>
</dbReference>
<dbReference type="IntAct" id="P43276">
    <property type="interactions" value="5"/>
</dbReference>
<dbReference type="MINT" id="P43276"/>
<dbReference type="STRING" id="10090.ENSMUSP00000079356"/>
<dbReference type="GlyGen" id="P43276">
    <property type="glycosylation" value="1 site, 1 O-linked glycan (1 site)"/>
</dbReference>
<dbReference type="iPTMnet" id="P43276"/>
<dbReference type="PhosphoSitePlus" id="P43276"/>
<dbReference type="jPOST" id="P43276"/>
<dbReference type="PaxDb" id="10090-ENSMUSP00000079356"/>
<dbReference type="PeptideAtlas" id="P43276"/>
<dbReference type="ProteomicsDB" id="269705"/>
<dbReference type="Pumba" id="P43276"/>
<dbReference type="Antibodypedia" id="54587">
    <property type="antibodies" value="219 antibodies from 22 providers"/>
</dbReference>
<dbReference type="DNASU" id="56702"/>
<dbReference type="Ensembl" id="ENSMUST00000080511.3">
    <property type="protein sequence ID" value="ENSMUSP00000079356.3"/>
    <property type="gene ID" value="ENSMUSG00000058773.3"/>
</dbReference>
<dbReference type="GeneID" id="56702"/>
<dbReference type="KEGG" id="mmu:56702"/>
<dbReference type="UCSC" id="uc007pri.2">
    <property type="organism name" value="mouse"/>
</dbReference>
<dbReference type="AGR" id="MGI:1861461"/>
<dbReference type="CTD" id="56702"/>
<dbReference type="MGI" id="MGI:1861461">
    <property type="gene designation" value="H1f5"/>
</dbReference>
<dbReference type="VEuPathDB" id="HostDB:ENSMUSG00000058773"/>
<dbReference type="eggNOG" id="KOG4012">
    <property type="taxonomic scope" value="Eukaryota"/>
</dbReference>
<dbReference type="GeneTree" id="ENSGT00940000162950"/>
<dbReference type="HOGENOM" id="CLU_052897_7_0_1"/>
<dbReference type="InParanoid" id="P43276"/>
<dbReference type="OMA" id="TARPPYF"/>
<dbReference type="OrthoDB" id="9634976at2759"/>
<dbReference type="PhylomeDB" id="P43276"/>
<dbReference type="TreeFam" id="TF313664"/>
<dbReference type="Reactome" id="R-MMU-140342">
    <property type="pathway name" value="Apoptosis induced DNA fragmentation"/>
</dbReference>
<dbReference type="Reactome" id="R-MMU-2559584">
    <property type="pathway name" value="Formation of Senescence-Associated Heterochromatin Foci (SAHF)"/>
</dbReference>
<dbReference type="BioGRID-ORCS" id="56702">
    <property type="hits" value="5 hits in 80 CRISPR screens"/>
</dbReference>
<dbReference type="CD-CODE" id="CE726F99">
    <property type="entry name" value="Postsynaptic density"/>
</dbReference>
<dbReference type="PRO" id="PR:P43276"/>
<dbReference type="Proteomes" id="UP000000589">
    <property type="component" value="Chromosome 13"/>
</dbReference>
<dbReference type="RNAct" id="P43276">
    <property type="molecule type" value="protein"/>
</dbReference>
<dbReference type="Bgee" id="ENSMUSG00000058773">
    <property type="expression patterns" value="Expressed in uterus and 88 other cell types or tissues"/>
</dbReference>
<dbReference type="GO" id="GO:0000792">
    <property type="term" value="C:heterochromatin"/>
    <property type="evidence" value="ECO:0007669"/>
    <property type="project" value="Ensembl"/>
</dbReference>
<dbReference type="GO" id="GO:0005730">
    <property type="term" value="C:nucleolus"/>
    <property type="evidence" value="ECO:0007669"/>
    <property type="project" value="Ensembl"/>
</dbReference>
<dbReference type="GO" id="GO:0005654">
    <property type="term" value="C:nucleoplasm"/>
    <property type="evidence" value="ECO:0007669"/>
    <property type="project" value="Ensembl"/>
</dbReference>
<dbReference type="GO" id="GO:0000786">
    <property type="term" value="C:nucleosome"/>
    <property type="evidence" value="ECO:0007669"/>
    <property type="project" value="InterPro"/>
</dbReference>
<dbReference type="GO" id="GO:0031490">
    <property type="term" value="F:chromatin DNA binding"/>
    <property type="evidence" value="ECO:0007669"/>
    <property type="project" value="Ensembl"/>
</dbReference>
<dbReference type="GO" id="GO:0003677">
    <property type="term" value="F:DNA binding"/>
    <property type="evidence" value="ECO:0000314"/>
    <property type="project" value="MGI"/>
</dbReference>
<dbReference type="GO" id="GO:0042826">
    <property type="term" value="F:histone deacetylase binding"/>
    <property type="evidence" value="ECO:0007669"/>
    <property type="project" value="Ensembl"/>
</dbReference>
<dbReference type="GO" id="GO:0030527">
    <property type="term" value="F:structural constituent of chromatin"/>
    <property type="evidence" value="ECO:0007669"/>
    <property type="project" value="InterPro"/>
</dbReference>
<dbReference type="GO" id="GO:0071169">
    <property type="term" value="P:establishment of protein localization to chromatin"/>
    <property type="evidence" value="ECO:0007669"/>
    <property type="project" value="Ensembl"/>
</dbReference>
<dbReference type="GO" id="GO:0007517">
    <property type="term" value="P:muscle organ development"/>
    <property type="evidence" value="ECO:0000353"/>
    <property type="project" value="MGI"/>
</dbReference>
<dbReference type="GO" id="GO:0000122">
    <property type="term" value="P:negative regulation of transcription by RNA polymerase II"/>
    <property type="evidence" value="ECO:0007669"/>
    <property type="project" value="Ensembl"/>
</dbReference>
<dbReference type="GO" id="GO:0006334">
    <property type="term" value="P:nucleosome assembly"/>
    <property type="evidence" value="ECO:0007669"/>
    <property type="project" value="InterPro"/>
</dbReference>
<dbReference type="GO" id="GO:0050821">
    <property type="term" value="P:protein stabilization"/>
    <property type="evidence" value="ECO:0007669"/>
    <property type="project" value="Ensembl"/>
</dbReference>
<dbReference type="CDD" id="cd00073">
    <property type="entry name" value="H15"/>
    <property type="match status" value="1"/>
</dbReference>
<dbReference type="FunFam" id="1.10.10.10:FF:000075">
    <property type="entry name" value="Histone H1 like"/>
    <property type="match status" value="1"/>
</dbReference>
<dbReference type="Gene3D" id="1.10.10.10">
    <property type="entry name" value="Winged helix-like DNA-binding domain superfamily/Winged helix DNA-binding domain"/>
    <property type="match status" value="1"/>
</dbReference>
<dbReference type="InterPro" id="IPR005819">
    <property type="entry name" value="H1/H5"/>
</dbReference>
<dbReference type="InterPro" id="IPR005818">
    <property type="entry name" value="Histone_H1/H5_H15"/>
</dbReference>
<dbReference type="InterPro" id="IPR036388">
    <property type="entry name" value="WH-like_DNA-bd_sf"/>
</dbReference>
<dbReference type="InterPro" id="IPR036390">
    <property type="entry name" value="WH_DNA-bd_sf"/>
</dbReference>
<dbReference type="Pfam" id="PF00538">
    <property type="entry name" value="Linker_histone"/>
    <property type="match status" value="1"/>
</dbReference>
<dbReference type="PRINTS" id="PR00624">
    <property type="entry name" value="HISTONEH5"/>
</dbReference>
<dbReference type="SMART" id="SM00526">
    <property type="entry name" value="H15"/>
    <property type="match status" value="1"/>
</dbReference>
<dbReference type="SUPFAM" id="SSF46785">
    <property type="entry name" value="Winged helix' DNA-binding domain"/>
    <property type="match status" value="1"/>
</dbReference>
<dbReference type="PROSITE" id="PS51504">
    <property type="entry name" value="H15"/>
    <property type="match status" value="1"/>
</dbReference>